<organism>
    <name type="scientific">Novosphingobium aromaticivorans (strain ATCC 700278 / DSM 12444 / CCUG 56034 / CIP 105152 / NBRC 16084 / F199)</name>
    <dbReference type="NCBI Taxonomy" id="279238"/>
    <lineage>
        <taxon>Bacteria</taxon>
        <taxon>Pseudomonadati</taxon>
        <taxon>Pseudomonadota</taxon>
        <taxon>Alphaproteobacteria</taxon>
        <taxon>Sphingomonadales</taxon>
        <taxon>Sphingomonadaceae</taxon>
        <taxon>Novosphingobium</taxon>
    </lineage>
</organism>
<dbReference type="EMBL" id="CP000248">
    <property type="protein sequence ID" value="ABD24592.1"/>
    <property type="molecule type" value="Genomic_DNA"/>
</dbReference>
<dbReference type="RefSeq" id="WP_011443806.1">
    <property type="nucleotide sequence ID" value="NC_007794.1"/>
</dbReference>
<dbReference type="STRING" id="279238.Saro_0143"/>
<dbReference type="KEGG" id="nar:Saro_0143"/>
<dbReference type="eggNOG" id="COG5328">
    <property type="taxonomic scope" value="Bacteria"/>
</dbReference>
<dbReference type="HOGENOM" id="CLU_112904_0_0_5"/>
<dbReference type="Proteomes" id="UP000009134">
    <property type="component" value="Chromosome"/>
</dbReference>
<dbReference type="HAMAP" id="MF_00678">
    <property type="entry name" value="UPF0262"/>
    <property type="match status" value="1"/>
</dbReference>
<dbReference type="InterPro" id="IPR008321">
    <property type="entry name" value="UCP032146"/>
</dbReference>
<dbReference type="NCBIfam" id="NF002769">
    <property type="entry name" value="PRK02853.1"/>
    <property type="match status" value="1"/>
</dbReference>
<dbReference type="Pfam" id="PF06793">
    <property type="entry name" value="UPF0262"/>
    <property type="match status" value="1"/>
</dbReference>
<dbReference type="PIRSF" id="PIRSF032146">
    <property type="entry name" value="UCP032146"/>
    <property type="match status" value="1"/>
</dbReference>
<name>Y143_NOVAD</name>
<keyword id="KW-1185">Reference proteome</keyword>
<evidence type="ECO:0000255" key="1">
    <source>
        <dbReference type="HAMAP-Rule" id="MF_00678"/>
    </source>
</evidence>
<comment type="similarity">
    <text evidence="1">Belongs to the UPF0262 family.</text>
</comment>
<protein>
    <recommendedName>
        <fullName evidence="1">UPF0262 protein Saro_0143</fullName>
    </recommendedName>
</protein>
<feature type="chain" id="PRO_0000314202" description="UPF0262 protein Saro_0143">
    <location>
        <begin position="1"/>
        <end position="164"/>
    </location>
</feature>
<gene>
    <name type="ordered locus">Saro_0143</name>
</gene>
<proteinExistence type="inferred from homology"/>
<reference key="1">
    <citation type="submission" date="2006-01" db="EMBL/GenBank/DDBJ databases">
        <title>Complete sequence of Novosphingobium aromaticivorans DSM 12444.</title>
        <authorList>
            <consortium name="US DOE Joint Genome Institute"/>
            <person name="Copeland A."/>
            <person name="Lucas S."/>
            <person name="Lapidus A."/>
            <person name="Barry K."/>
            <person name="Detter J.C."/>
            <person name="Glavina T."/>
            <person name="Hammon N."/>
            <person name="Israni S."/>
            <person name="Pitluck S."/>
            <person name="Chain P."/>
            <person name="Malfatti S."/>
            <person name="Shin M."/>
            <person name="Vergez L."/>
            <person name="Schmutz J."/>
            <person name="Larimer F."/>
            <person name="Land M."/>
            <person name="Kyrpides N."/>
            <person name="Ivanova N."/>
            <person name="Fredrickson J."/>
            <person name="Balkwill D."/>
            <person name="Romine M.F."/>
            <person name="Richardson P."/>
        </authorList>
    </citation>
    <scope>NUCLEOTIDE SEQUENCE [LARGE SCALE GENOMIC DNA]</scope>
    <source>
        <strain>ATCC 700278 / DSM 12444 / CCUG 56034 / CIP 105152 / NBRC 16084 / F199</strain>
    </source>
</reference>
<sequence length="164" mass="18674">MGDPRISHIELDEATIIWRNADIEQERRIAIFDLIEENTFKPLRAFEAGHEGPYRLKLSVEDGRLALTVSDDDGNGGGQLLETVILGLGRFRRPIREYFAICDSYYQAIRKATATEIETIDMARRGVHNEAAEMLLERLQGKIDTDFATARRLFTLICVLHIRG</sequence>
<accession>Q2GC31</accession>